<dbReference type="EMBL" id="CP000382">
    <property type="protein sequence ID" value="ABK60988.1"/>
    <property type="molecule type" value="Genomic_DNA"/>
</dbReference>
<dbReference type="RefSeq" id="WP_011722323.1">
    <property type="nucleotide sequence ID" value="NC_008593.1"/>
</dbReference>
<dbReference type="SMR" id="A0Q125"/>
<dbReference type="STRING" id="386415.NT01CX_2254"/>
<dbReference type="KEGG" id="cno:NT01CX_2254"/>
<dbReference type="eggNOG" id="COG1160">
    <property type="taxonomic scope" value="Bacteria"/>
</dbReference>
<dbReference type="HOGENOM" id="CLU_016077_6_2_9"/>
<dbReference type="Proteomes" id="UP000008220">
    <property type="component" value="Chromosome"/>
</dbReference>
<dbReference type="GO" id="GO:0016887">
    <property type="term" value="F:ATP hydrolysis activity"/>
    <property type="evidence" value="ECO:0007669"/>
    <property type="project" value="InterPro"/>
</dbReference>
<dbReference type="GO" id="GO:0005525">
    <property type="term" value="F:GTP binding"/>
    <property type="evidence" value="ECO:0007669"/>
    <property type="project" value="UniProtKB-UniRule"/>
</dbReference>
<dbReference type="GO" id="GO:0043022">
    <property type="term" value="F:ribosome binding"/>
    <property type="evidence" value="ECO:0007669"/>
    <property type="project" value="TreeGrafter"/>
</dbReference>
<dbReference type="GO" id="GO:0042254">
    <property type="term" value="P:ribosome biogenesis"/>
    <property type="evidence" value="ECO:0007669"/>
    <property type="project" value="UniProtKB-KW"/>
</dbReference>
<dbReference type="CDD" id="cd01894">
    <property type="entry name" value="EngA1"/>
    <property type="match status" value="1"/>
</dbReference>
<dbReference type="CDD" id="cd01895">
    <property type="entry name" value="EngA2"/>
    <property type="match status" value="1"/>
</dbReference>
<dbReference type="FunFam" id="3.30.300.20:FF:000004">
    <property type="entry name" value="GTPase Der"/>
    <property type="match status" value="1"/>
</dbReference>
<dbReference type="FunFam" id="3.40.50.300:FF:000040">
    <property type="entry name" value="GTPase Der"/>
    <property type="match status" value="1"/>
</dbReference>
<dbReference type="FunFam" id="3.40.50.300:FF:000057">
    <property type="entry name" value="GTPase Der"/>
    <property type="match status" value="1"/>
</dbReference>
<dbReference type="Gene3D" id="3.30.300.20">
    <property type="match status" value="1"/>
</dbReference>
<dbReference type="Gene3D" id="3.40.50.300">
    <property type="entry name" value="P-loop containing nucleotide triphosphate hydrolases"/>
    <property type="match status" value="2"/>
</dbReference>
<dbReference type="HAMAP" id="MF_00195">
    <property type="entry name" value="GTPase_Der"/>
    <property type="match status" value="1"/>
</dbReference>
<dbReference type="InterPro" id="IPR003593">
    <property type="entry name" value="AAA+_ATPase"/>
</dbReference>
<dbReference type="InterPro" id="IPR031166">
    <property type="entry name" value="G_ENGA"/>
</dbReference>
<dbReference type="InterPro" id="IPR006073">
    <property type="entry name" value="GTP-bd"/>
</dbReference>
<dbReference type="InterPro" id="IPR016484">
    <property type="entry name" value="GTPase_Der"/>
</dbReference>
<dbReference type="InterPro" id="IPR032859">
    <property type="entry name" value="KH_dom-like"/>
</dbReference>
<dbReference type="InterPro" id="IPR015946">
    <property type="entry name" value="KH_dom-like_a/b"/>
</dbReference>
<dbReference type="InterPro" id="IPR027417">
    <property type="entry name" value="P-loop_NTPase"/>
</dbReference>
<dbReference type="InterPro" id="IPR005225">
    <property type="entry name" value="Small_GTP-bd"/>
</dbReference>
<dbReference type="NCBIfam" id="TIGR03594">
    <property type="entry name" value="GTPase_EngA"/>
    <property type="match status" value="1"/>
</dbReference>
<dbReference type="NCBIfam" id="TIGR00231">
    <property type="entry name" value="small_GTP"/>
    <property type="match status" value="2"/>
</dbReference>
<dbReference type="PANTHER" id="PTHR43834">
    <property type="entry name" value="GTPASE DER"/>
    <property type="match status" value="1"/>
</dbReference>
<dbReference type="PANTHER" id="PTHR43834:SF6">
    <property type="entry name" value="GTPASE DER"/>
    <property type="match status" value="1"/>
</dbReference>
<dbReference type="Pfam" id="PF14714">
    <property type="entry name" value="KH_dom-like"/>
    <property type="match status" value="1"/>
</dbReference>
<dbReference type="Pfam" id="PF01926">
    <property type="entry name" value="MMR_HSR1"/>
    <property type="match status" value="2"/>
</dbReference>
<dbReference type="PIRSF" id="PIRSF006485">
    <property type="entry name" value="GTP-binding_EngA"/>
    <property type="match status" value="1"/>
</dbReference>
<dbReference type="PRINTS" id="PR00326">
    <property type="entry name" value="GTP1OBG"/>
</dbReference>
<dbReference type="SMART" id="SM00382">
    <property type="entry name" value="AAA"/>
    <property type="match status" value="2"/>
</dbReference>
<dbReference type="SUPFAM" id="SSF52540">
    <property type="entry name" value="P-loop containing nucleoside triphosphate hydrolases"/>
    <property type="match status" value="2"/>
</dbReference>
<dbReference type="PROSITE" id="PS51712">
    <property type="entry name" value="G_ENGA"/>
    <property type="match status" value="2"/>
</dbReference>
<keyword id="KW-0342">GTP-binding</keyword>
<keyword id="KW-0547">Nucleotide-binding</keyword>
<keyword id="KW-1185">Reference proteome</keyword>
<keyword id="KW-0677">Repeat</keyword>
<keyword id="KW-0690">Ribosome biogenesis</keyword>
<protein>
    <recommendedName>
        <fullName evidence="1">GTPase Der</fullName>
    </recommendedName>
    <alternativeName>
        <fullName evidence="1">GTP-binding protein EngA</fullName>
    </alternativeName>
</protein>
<proteinExistence type="inferred from homology"/>
<name>DER_CLONN</name>
<reference key="1">
    <citation type="journal article" date="2006" name="Nat. Biotechnol.">
        <title>The genome and transcriptomes of the anti-tumor agent Clostridium novyi-NT.</title>
        <authorList>
            <person name="Bettegowda C."/>
            <person name="Huang X."/>
            <person name="Lin J."/>
            <person name="Cheong I."/>
            <person name="Kohli M."/>
            <person name="Szabo S.A."/>
            <person name="Zhang X."/>
            <person name="Diaz L.A. Jr."/>
            <person name="Velculescu V.E."/>
            <person name="Parmigiani G."/>
            <person name="Kinzler K.W."/>
            <person name="Vogelstein B."/>
            <person name="Zhou S."/>
        </authorList>
    </citation>
    <scope>NUCLEOTIDE SEQUENCE [LARGE SCALE GENOMIC DNA]</scope>
    <source>
        <strain>NT</strain>
    </source>
</reference>
<gene>
    <name evidence="1" type="primary">der</name>
    <name type="synonym">engA</name>
    <name type="ordered locus">NT01CX_2254</name>
</gene>
<sequence>MGKPIVAIVGRPNVGKSTLFNKLAGKRIAIVDDMPGVTRDRIYAEAEWLNNNFTIIDTGGIEPENDDIIVAQMRRQAQLAIEMADVVLFIVDGKQGLTDADREVAHMLRKASKSIVLAVNKIDRRQLDDNIYEFYNLGLGDPMPISASQGLGLGDLLDEVIEKFPEGNVEEEEDEYIRIAMIGRPNVGKSSLINKILGEEKHIVSNIPGTTRDAVDSYVETEEGKFVLIDTAGLRRKSKIKEQVERYSAVRTLASIENADVCILMIDATEDIAEQDERIIGYAHEINKAILVIVNKWDLIEKDDKTMKNFKDKLRTKLSFLPYASFLFISAKTGQRVHKVLGMAKECYGNYCKRIKTGILNDIINKAVLMKEPPVMGTRRLKIYYVTQIGTKPPTFVFFVNDPELLHFSYRRYLENKLRESFDFSGTGIKLEFRERKE</sequence>
<accession>A0Q125</accession>
<evidence type="ECO:0000255" key="1">
    <source>
        <dbReference type="HAMAP-Rule" id="MF_00195"/>
    </source>
</evidence>
<comment type="function">
    <text evidence="1">GTPase that plays an essential role in the late steps of ribosome biogenesis.</text>
</comment>
<comment type="subunit">
    <text evidence="1">Associates with the 50S ribosomal subunit.</text>
</comment>
<comment type="similarity">
    <text evidence="1">Belongs to the TRAFAC class TrmE-Era-EngA-EngB-Septin-like GTPase superfamily. EngA (Der) GTPase family.</text>
</comment>
<feature type="chain" id="PRO_1000011608" description="GTPase Der">
    <location>
        <begin position="1"/>
        <end position="438"/>
    </location>
</feature>
<feature type="domain" description="EngA-type G 1">
    <location>
        <begin position="4"/>
        <end position="168"/>
    </location>
</feature>
<feature type="domain" description="EngA-type G 2">
    <location>
        <begin position="177"/>
        <end position="352"/>
    </location>
</feature>
<feature type="domain" description="KH-like" evidence="1">
    <location>
        <begin position="353"/>
        <end position="437"/>
    </location>
</feature>
<feature type="binding site" evidence="1">
    <location>
        <begin position="10"/>
        <end position="17"/>
    </location>
    <ligand>
        <name>GTP</name>
        <dbReference type="ChEBI" id="CHEBI:37565"/>
        <label>1</label>
    </ligand>
</feature>
<feature type="binding site" evidence="1">
    <location>
        <begin position="57"/>
        <end position="61"/>
    </location>
    <ligand>
        <name>GTP</name>
        <dbReference type="ChEBI" id="CHEBI:37565"/>
        <label>1</label>
    </ligand>
</feature>
<feature type="binding site" evidence="1">
    <location>
        <begin position="120"/>
        <end position="123"/>
    </location>
    <ligand>
        <name>GTP</name>
        <dbReference type="ChEBI" id="CHEBI:37565"/>
        <label>1</label>
    </ligand>
</feature>
<feature type="binding site" evidence="1">
    <location>
        <begin position="183"/>
        <end position="190"/>
    </location>
    <ligand>
        <name>GTP</name>
        <dbReference type="ChEBI" id="CHEBI:37565"/>
        <label>2</label>
    </ligand>
</feature>
<feature type="binding site" evidence="1">
    <location>
        <begin position="230"/>
        <end position="234"/>
    </location>
    <ligand>
        <name>GTP</name>
        <dbReference type="ChEBI" id="CHEBI:37565"/>
        <label>2</label>
    </ligand>
</feature>
<feature type="binding site" evidence="1">
    <location>
        <begin position="295"/>
        <end position="298"/>
    </location>
    <ligand>
        <name>GTP</name>
        <dbReference type="ChEBI" id="CHEBI:37565"/>
        <label>2</label>
    </ligand>
</feature>
<organism>
    <name type="scientific">Clostridium novyi (strain NT)</name>
    <dbReference type="NCBI Taxonomy" id="386415"/>
    <lineage>
        <taxon>Bacteria</taxon>
        <taxon>Bacillati</taxon>
        <taxon>Bacillota</taxon>
        <taxon>Clostridia</taxon>
        <taxon>Eubacteriales</taxon>
        <taxon>Clostridiaceae</taxon>
        <taxon>Clostridium</taxon>
    </lineage>
</organism>